<reference key="1">
    <citation type="submission" date="2000-12" db="EMBL/GenBank/DDBJ databases">
        <authorList>
            <person name="Antonarakis S."/>
        </authorList>
    </citation>
    <scope>NUCLEOTIDE SEQUENCE [MRNA] OF 1-1779</scope>
</reference>
<reference key="2">
    <citation type="journal article" date="2000" name="J. Biochem.">
        <title>Identification of a novel WD repeat-containing gene predominantly expressed in developing and regenerating neurons.</title>
        <authorList>
            <person name="Kato H."/>
            <person name="Chen S."/>
            <person name="Kiyama H."/>
            <person name="Ikeda K."/>
            <person name="Kimura N."/>
            <person name="Nakashima K."/>
            <person name="Taga T."/>
        </authorList>
    </citation>
    <scope>NUCLEOTIDE SEQUENCE [MRNA] OF 1-999</scope>
    <scope>TISSUE SPECIFICITY</scope>
    <scope>DEVELOPMENTAL STAGE</scope>
    <scope>INDUCTION</scope>
    <source>
        <strain>Swiss Webster / NIH</strain>
    </source>
</reference>
<reference key="3">
    <citation type="journal article" date="2004" name="Genome Res.">
        <title>The status, quality, and expansion of the NIH full-length cDNA project: the Mammalian Gene Collection (MGC).</title>
        <authorList>
            <consortium name="The MGC Project Team"/>
        </authorList>
    </citation>
    <scope>NUCLEOTIDE SEQUENCE [LARGE SCALE MRNA] OF 1-893</scope>
    <source>
        <strain>Czech II</strain>
        <tissue>Mammary tumor</tissue>
    </source>
</reference>
<reference key="4">
    <citation type="journal article" date="2005" name="Science">
        <title>The transcriptional landscape of the mammalian genome.</title>
        <authorList>
            <person name="Carninci P."/>
            <person name="Kasukawa T."/>
            <person name="Katayama S."/>
            <person name="Gough J."/>
            <person name="Frith M.C."/>
            <person name="Maeda N."/>
            <person name="Oyama R."/>
            <person name="Ravasi T."/>
            <person name="Lenhard B."/>
            <person name="Wells C."/>
            <person name="Kodzius R."/>
            <person name="Shimokawa K."/>
            <person name="Bajic V.B."/>
            <person name="Brenner S.E."/>
            <person name="Batalov S."/>
            <person name="Forrest A.R."/>
            <person name="Zavolan M."/>
            <person name="Davis M.J."/>
            <person name="Wilming L.G."/>
            <person name="Aidinis V."/>
            <person name="Allen J.E."/>
            <person name="Ambesi-Impiombato A."/>
            <person name="Apweiler R."/>
            <person name="Aturaliya R.N."/>
            <person name="Bailey T.L."/>
            <person name="Bansal M."/>
            <person name="Baxter L."/>
            <person name="Beisel K.W."/>
            <person name="Bersano T."/>
            <person name="Bono H."/>
            <person name="Chalk A.M."/>
            <person name="Chiu K.P."/>
            <person name="Choudhary V."/>
            <person name="Christoffels A."/>
            <person name="Clutterbuck D.R."/>
            <person name="Crowe M.L."/>
            <person name="Dalla E."/>
            <person name="Dalrymple B.P."/>
            <person name="de Bono B."/>
            <person name="Della Gatta G."/>
            <person name="di Bernardo D."/>
            <person name="Down T."/>
            <person name="Engstrom P."/>
            <person name="Fagiolini M."/>
            <person name="Faulkner G."/>
            <person name="Fletcher C.F."/>
            <person name="Fukushima T."/>
            <person name="Furuno M."/>
            <person name="Futaki S."/>
            <person name="Gariboldi M."/>
            <person name="Georgii-Hemming P."/>
            <person name="Gingeras T.R."/>
            <person name="Gojobori T."/>
            <person name="Green R.E."/>
            <person name="Gustincich S."/>
            <person name="Harbers M."/>
            <person name="Hayashi Y."/>
            <person name="Hensch T.K."/>
            <person name="Hirokawa N."/>
            <person name="Hill D."/>
            <person name="Huminiecki L."/>
            <person name="Iacono M."/>
            <person name="Ikeo K."/>
            <person name="Iwama A."/>
            <person name="Ishikawa T."/>
            <person name="Jakt M."/>
            <person name="Kanapin A."/>
            <person name="Katoh M."/>
            <person name="Kawasawa Y."/>
            <person name="Kelso J."/>
            <person name="Kitamura H."/>
            <person name="Kitano H."/>
            <person name="Kollias G."/>
            <person name="Krishnan S.P."/>
            <person name="Kruger A."/>
            <person name="Kummerfeld S.K."/>
            <person name="Kurochkin I.V."/>
            <person name="Lareau L.F."/>
            <person name="Lazarevic D."/>
            <person name="Lipovich L."/>
            <person name="Liu J."/>
            <person name="Liuni S."/>
            <person name="McWilliam S."/>
            <person name="Madan Babu M."/>
            <person name="Madera M."/>
            <person name="Marchionni L."/>
            <person name="Matsuda H."/>
            <person name="Matsuzawa S."/>
            <person name="Miki H."/>
            <person name="Mignone F."/>
            <person name="Miyake S."/>
            <person name="Morris K."/>
            <person name="Mottagui-Tabar S."/>
            <person name="Mulder N."/>
            <person name="Nakano N."/>
            <person name="Nakauchi H."/>
            <person name="Ng P."/>
            <person name="Nilsson R."/>
            <person name="Nishiguchi S."/>
            <person name="Nishikawa S."/>
            <person name="Nori F."/>
            <person name="Ohara O."/>
            <person name="Okazaki Y."/>
            <person name="Orlando V."/>
            <person name="Pang K.C."/>
            <person name="Pavan W.J."/>
            <person name="Pavesi G."/>
            <person name="Pesole G."/>
            <person name="Petrovsky N."/>
            <person name="Piazza S."/>
            <person name="Reed J."/>
            <person name="Reid J.F."/>
            <person name="Ring B.Z."/>
            <person name="Ringwald M."/>
            <person name="Rost B."/>
            <person name="Ruan Y."/>
            <person name="Salzberg S.L."/>
            <person name="Sandelin A."/>
            <person name="Schneider C."/>
            <person name="Schoenbach C."/>
            <person name="Sekiguchi K."/>
            <person name="Semple C.A."/>
            <person name="Seno S."/>
            <person name="Sessa L."/>
            <person name="Sheng Y."/>
            <person name="Shibata Y."/>
            <person name="Shimada H."/>
            <person name="Shimada K."/>
            <person name="Silva D."/>
            <person name="Sinclair B."/>
            <person name="Sperling S."/>
            <person name="Stupka E."/>
            <person name="Sugiura K."/>
            <person name="Sultana R."/>
            <person name="Takenaka Y."/>
            <person name="Taki K."/>
            <person name="Tammoja K."/>
            <person name="Tan S.L."/>
            <person name="Tang S."/>
            <person name="Taylor M.S."/>
            <person name="Tegner J."/>
            <person name="Teichmann S.A."/>
            <person name="Ueda H.R."/>
            <person name="van Nimwegen E."/>
            <person name="Verardo R."/>
            <person name="Wei C.L."/>
            <person name="Yagi K."/>
            <person name="Yamanishi H."/>
            <person name="Zabarovsky E."/>
            <person name="Zhu S."/>
            <person name="Zimmer A."/>
            <person name="Hide W."/>
            <person name="Bult C."/>
            <person name="Grimmond S.M."/>
            <person name="Teasdale R.D."/>
            <person name="Liu E.T."/>
            <person name="Brusic V."/>
            <person name="Quackenbush J."/>
            <person name="Wahlestedt C."/>
            <person name="Mattick J.S."/>
            <person name="Hume D.A."/>
            <person name="Kai C."/>
            <person name="Sasaki D."/>
            <person name="Tomaru Y."/>
            <person name="Fukuda S."/>
            <person name="Kanamori-Katayama M."/>
            <person name="Suzuki M."/>
            <person name="Aoki J."/>
            <person name="Arakawa T."/>
            <person name="Iida J."/>
            <person name="Imamura K."/>
            <person name="Itoh M."/>
            <person name="Kato T."/>
            <person name="Kawaji H."/>
            <person name="Kawagashira N."/>
            <person name="Kawashima T."/>
            <person name="Kojima M."/>
            <person name="Kondo S."/>
            <person name="Konno H."/>
            <person name="Nakano K."/>
            <person name="Ninomiya N."/>
            <person name="Nishio T."/>
            <person name="Okada M."/>
            <person name="Plessy C."/>
            <person name="Shibata K."/>
            <person name="Shiraki T."/>
            <person name="Suzuki S."/>
            <person name="Tagami M."/>
            <person name="Waki K."/>
            <person name="Watahiki A."/>
            <person name="Okamura-Oho Y."/>
            <person name="Suzuki H."/>
            <person name="Kawai J."/>
            <person name="Hayashizaki Y."/>
        </authorList>
    </citation>
    <scope>NUCLEOTIDE SEQUENCE [LARGE SCALE MRNA] OF 745-1458</scope>
    <source>
        <strain>C57BL/6J</strain>
        <tissue>Egg</tissue>
    </source>
</reference>
<reference key="5">
    <citation type="journal article" date="2000" name="J. Biol. Chem.">
        <title>Cloning and characterization of PHIP, a novel insulin receptor substrate-1 pleckstrin homology domain interacting protein.</title>
        <authorList>
            <person name="Farhang-Fallah J."/>
            <person name="Yin X."/>
            <person name="Trentin G."/>
            <person name="Cheng A.M."/>
            <person name="Rozakis-Adcock M."/>
        </authorList>
    </citation>
    <scope>NUCLEOTIDE SEQUENCE [MRNA] OF 924-1821</scope>
    <scope>FUNCTION</scope>
    <scope>INTERACTION WITH IRS1 AND IRS2</scope>
    <scope>TISSUE SPECIFICITY</scope>
</reference>
<reference key="6">
    <citation type="submission" date="2009-01" db="UniProtKB">
        <authorList>
            <person name="Lubec G."/>
            <person name="Sunyer B."/>
            <person name="Chen W.-Q."/>
        </authorList>
    </citation>
    <scope>PROTEIN SEQUENCE OF 1589-1596</scope>
    <scope>IDENTIFICATION BY MASS SPECTROMETRY</scope>
    <source>
        <strain>OF1</strain>
        <tissue>Hippocampus</tissue>
    </source>
</reference>
<reference key="7">
    <citation type="journal article" date="2002" name="Mol. Cell. Biol.">
        <title>The pleckstrin homology (PH) domain-interacting protein couples the insulin receptor substrate 1 PH domain to insulin signaling pathways leading to mitogenesis and GLUT4 translocation.</title>
        <authorList>
            <person name="Farhang-Fallah J."/>
            <person name="Randhawa V.K."/>
            <person name="Nimnual A."/>
            <person name="Klip A."/>
            <person name="Bar-Sagi D."/>
            <person name="Rozakis-Adcock M."/>
        </authorList>
    </citation>
    <scope>FUNCTION</scope>
</reference>
<reference key="8">
    <citation type="journal article" date="2007" name="Mol. Cell. Biol.">
        <title>Identification of a WD40 repeat-containing isoform of PHIP as a novel regulator of beta-cell growth and survival.</title>
        <authorList>
            <person name="Podcheko A."/>
            <person name="Northcott P."/>
            <person name="Bikopoulos G."/>
            <person name="Lee A."/>
            <person name="Bommareddi S.R."/>
            <person name="Kushner J.A."/>
            <person name="Farhang-Fallah J."/>
            <person name="Rozakis-Adcock M."/>
        </authorList>
    </citation>
    <scope>FUNCTION</scope>
    <scope>TISSUE SPECIFICITY</scope>
    <scope>SUBCELLULAR LOCATION</scope>
</reference>
<reference key="9">
    <citation type="journal article" date="2007" name="Proc. Natl. Acad. Sci. U.S.A.">
        <title>Large-scale phosphorylation analysis of mouse liver.</title>
        <authorList>
            <person name="Villen J."/>
            <person name="Beausoleil S.A."/>
            <person name="Gerber S.A."/>
            <person name="Gygi S.P."/>
        </authorList>
    </citation>
    <scope>PHOSPHORYLATION [LARGE SCALE ANALYSIS] AT SER-1281 AND SER-1283</scope>
    <scope>IDENTIFICATION BY MASS SPECTROMETRY [LARGE SCALE ANALYSIS]</scope>
    <source>
        <tissue>Liver</tissue>
    </source>
</reference>
<reference key="10">
    <citation type="journal article" date="2009" name="Immunity">
        <title>The phagosomal proteome in interferon-gamma-activated macrophages.</title>
        <authorList>
            <person name="Trost M."/>
            <person name="English L."/>
            <person name="Lemieux S."/>
            <person name="Courcelles M."/>
            <person name="Desjardins M."/>
            <person name="Thibault P."/>
        </authorList>
    </citation>
    <scope>PHOSPHORYLATION [LARGE SCALE ANALYSIS] AT SER-1281 AND SER-1283</scope>
    <scope>IDENTIFICATION BY MASS SPECTROMETRY [LARGE SCALE ANALYSIS]</scope>
</reference>
<reference key="11">
    <citation type="journal article" date="2010" name="Cell">
        <title>A tissue-specific atlas of mouse protein phosphorylation and expression.</title>
        <authorList>
            <person name="Huttlin E.L."/>
            <person name="Jedrychowski M.P."/>
            <person name="Elias J.E."/>
            <person name="Goswami T."/>
            <person name="Rad R."/>
            <person name="Beausoleil S.A."/>
            <person name="Villen J."/>
            <person name="Haas W."/>
            <person name="Sowa M.E."/>
            <person name="Gygi S.P."/>
        </authorList>
    </citation>
    <scope>PHOSPHORYLATION [LARGE SCALE ANALYSIS] AT SER-1281; SER-1283; SER-1315 AND SER-1783</scope>
    <scope>IDENTIFICATION BY MASS SPECTROMETRY [LARGE SCALE ANALYSIS]</scope>
    <source>
        <tissue>Brain</tissue>
        <tissue>Brown adipose tissue</tissue>
        <tissue>Heart</tissue>
        <tissue>Kidney</tissue>
        <tissue>Liver</tissue>
        <tissue>Lung</tissue>
        <tissue>Spleen</tissue>
        <tissue>Testis</tissue>
    </source>
</reference>
<reference key="12">
    <citation type="journal article" date="2013" name="Mol. Cell">
        <title>SIRT5-mediated lysine desuccinylation impacts diverse metabolic pathways.</title>
        <authorList>
            <person name="Park J."/>
            <person name="Chen Y."/>
            <person name="Tishkoff D.X."/>
            <person name="Peng C."/>
            <person name="Tan M."/>
            <person name="Dai L."/>
            <person name="Xie Z."/>
            <person name="Zhang Y."/>
            <person name="Zwaans B.M."/>
            <person name="Skinner M.E."/>
            <person name="Lombard D.B."/>
            <person name="Zhao Y."/>
        </authorList>
    </citation>
    <scope>ACETYLATION [LARGE SCALE ANALYSIS] AT LYS-1533</scope>
    <scope>IDENTIFICATION BY MASS SPECTROMETRY [LARGE SCALE ANALYSIS]</scope>
    <source>
        <tissue>Embryonic fibroblast</tissue>
    </source>
</reference>
<evidence type="ECO:0000250" key="1"/>
<evidence type="ECO:0000250" key="2">
    <source>
        <dbReference type="UniProtKB" id="Q8WWQ0"/>
    </source>
</evidence>
<evidence type="ECO:0000255" key="3">
    <source>
        <dbReference type="PROSITE-ProRule" id="PRU00035"/>
    </source>
</evidence>
<evidence type="ECO:0000256" key="4">
    <source>
        <dbReference type="SAM" id="MobiDB-lite"/>
    </source>
</evidence>
<evidence type="ECO:0000269" key="5">
    <source>
    </source>
</evidence>
<evidence type="ECO:0000269" key="6">
    <source>
    </source>
</evidence>
<evidence type="ECO:0000269" key="7">
    <source>
    </source>
</evidence>
<evidence type="ECO:0000269" key="8">
    <source>
    </source>
</evidence>
<evidence type="ECO:0000305" key="9"/>
<evidence type="ECO:0007744" key="10">
    <source>
    </source>
</evidence>
<evidence type="ECO:0007744" key="11">
    <source>
    </source>
</evidence>
<evidence type="ECO:0007744" key="12">
    <source>
    </source>
</evidence>
<evidence type="ECO:0007744" key="13">
    <source>
    </source>
</evidence>
<keyword id="KW-0007">Acetylation</keyword>
<keyword id="KW-0103">Bromodomain</keyword>
<keyword id="KW-0903">Direct protein sequencing</keyword>
<keyword id="KW-1017">Isopeptide bond</keyword>
<keyword id="KW-0539">Nucleus</keyword>
<keyword id="KW-0597">Phosphoprotein</keyword>
<keyword id="KW-1185">Reference proteome</keyword>
<keyword id="KW-0677">Repeat</keyword>
<keyword id="KW-0832">Ubl conjugation</keyword>
<keyword id="KW-0853">WD repeat</keyword>
<dbReference type="EMBL" id="AJ303103">
    <property type="protein sequence ID" value="CAC83119.1"/>
    <property type="molecule type" value="mRNA"/>
</dbReference>
<dbReference type="EMBL" id="AB049460">
    <property type="protein sequence ID" value="BAB16299.1"/>
    <property type="status" value="ALT_SEQ"/>
    <property type="molecule type" value="mRNA"/>
</dbReference>
<dbReference type="EMBL" id="BC049950">
    <property type="protein sequence ID" value="AAH49950.1"/>
    <property type="status" value="ALT_TERM"/>
    <property type="molecule type" value="mRNA"/>
</dbReference>
<dbReference type="EMBL" id="AK162189">
    <property type="protein sequence ID" value="BAE36779.1"/>
    <property type="molecule type" value="mRNA"/>
</dbReference>
<dbReference type="EMBL" id="AF310251">
    <property type="protein sequence ID" value="AAG45146.1"/>
    <property type="status" value="ALT_SEQ"/>
    <property type="molecule type" value="mRNA"/>
</dbReference>
<dbReference type="CCDS" id="CCDS40706.1"/>
<dbReference type="SMR" id="Q8VDD9"/>
<dbReference type="FunCoup" id="Q8VDD9">
    <property type="interactions" value="3401"/>
</dbReference>
<dbReference type="IntAct" id="Q8VDD9">
    <property type="interactions" value="6"/>
</dbReference>
<dbReference type="MINT" id="Q8VDD9"/>
<dbReference type="STRING" id="10090.ENSMUSP00000034787"/>
<dbReference type="GlyGen" id="Q8VDD9">
    <property type="glycosylation" value="3 sites, 1 N-linked glycan (1 site), 1 O-linked glycan (1 site)"/>
</dbReference>
<dbReference type="iPTMnet" id="Q8VDD9"/>
<dbReference type="PhosphoSitePlus" id="Q8VDD9"/>
<dbReference type="jPOST" id="Q8VDD9"/>
<dbReference type="PaxDb" id="10090-ENSMUSP00000034787"/>
<dbReference type="ProteomicsDB" id="301813"/>
<dbReference type="Pumba" id="Q8VDD9"/>
<dbReference type="UCSC" id="uc009qvw.1">
    <property type="organism name" value="mouse"/>
</dbReference>
<dbReference type="AGR" id="MGI:1932404"/>
<dbReference type="MGI" id="MGI:1932404">
    <property type="gene designation" value="Phip"/>
</dbReference>
<dbReference type="eggNOG" id="KOG0644">
    <property type="taxonomic scope" value="Eukaryota"/>
</dbReference>
<dbReference type="InParanoid" id="Q8VDD9"/>
<dbReference type="PhylomeDB" id="Q8VDD9"/>
<dbReference type="Reactome" id="R-MMU-9013418">
    <property type="pathway name" value="RHOBTB2 GTPase cycle"/>
</dbReference>
<dbReference type="ChiTaRS" id="Phip">
    <property type="organism name" value="mouse"/>
</dbReference>
<dbReference type="PRO" id="PR:Q8VDD9"/>
<dbReference type="Proteomes" id="UP000000589">
    <property type="component" value="Unplaced"/>
</dbReference>
<dbReference type="RNAct" id="Q8VDD9">
    <property type="molecule type" value="protein"/>
</dbReference>
<dbReference type="GO" id="GO:0005634">
    <property type="term" value="C:nucleus"/>
    <property type="evidence" value="ECO:0000314"/>
    <property type="project" value="UniProtKB"/>
</dbReference>
<dbReference type="GO" id="GO:0070577">
    <property type="term" value="F:lysine-acetylated histone binding"/>
    <property type="evidence" value="ECO:0000250"/>
    <property type="project" value="UniProtKB"/>
</dbReference>
<dbReference type="GO" id="GO:0008283">
    <property type="term" value="P:cell population proliferation"/>
    <property type="evidence" value="ECO:0000316"/>
    <property type="project" value="MGI"/>
</dbReference>
<dbReference type="GO" id="GO:0007010">
    <property type="term" value="P:cytoskeleton organization"/>
    <property type="evidence" value="ECO:0000250"/>
    <property type="project" value="UniProtKB"/>
</dbReference>
<dbReference type="GO" id="GO:0048144">
    <property type="term" value="P:fibroblast proliferation"/>
    <property type="evidence" value="ECO:0000315"/>
    <property type="project" value="MGI"/>
</dbReference>
<dbReference type="GO" id="GO:0008286">
    <property type="term" value="P:insulin receptor signaling pathway"/>
    <property type="evidence" value="ECO:0000314"/>
    <property type="project" value="MGI"/>
</dbReference>
<dbReference type="GO" id="GO:0043066">
    <property type="term" value="P:negative regulation of apoptotic process"/>
    <property type="evidence" value="ECO:0000314"/>
    <property type="project" value="UniProtKB"/>
</dbReference>
<dbReference type="GO" id="GO:2001237">
    <property type="term" value="P:negative regulation of extrinsic apoptotic signaling pathway"/>
    <property type="evidence" value="ECO:0000266"/>
    <property type="project" value="MGI"/>
</dbReference>
<dbReference type="GO" id="GO:0008284">
    <property type="term" value="P:positive regulation of cell population proliferation"/>
    <property type="evidence" value="ECO:0000315"/>
    <property type="project" value="UniProtKB"/>
</dbReference>
<dbReference type="GO" id="GO:0045893">
    <property type="term" value="P:positive regulation of DNA-templated transcription"/>
    <property type="evidence" value="ECO:0000314"/>
    <property type="project" value="UniProtKB"/>
</dbReference>
<dbReference type="GO" id="GO:0048146">
    <property type="term" value="P:positive regulation of fibroblast proliferation"/>
    <property type="evidence" value="ECO:0000315"/>
    <property type="project" value="MGI"/>
</dbReference>
<dbReference type="GO" id="GO:0043568">
    <property type="term" value="P:positive regulation of insulin-like growth factor receptor signaling pathway"/>
    <property type="evidence" value="ECO:0000314"/>
    <property type="project" value="UniProtKB"/>
</dbReference>
<dbReference type="GO" id="GO:0045840">
    <property type="term" value="P:positive regulation of mitotic nuclear division"/>
    <property type="evidence" value="ECO:0000315"/>
    <property type="project" value="UniProtKB"/>
</dbReference>
<dbReference type="GO" id="GO:0045944">
    <property type="term" value="P:positive regulation of transcription by RNA polymerase II"/>
    <property type="evidence" value="ECO:0000266"/>
    <property type="project" value="MGI"/>
</dbReference>
<dbReference type="GO" id="GO:1904692">
    <property type="term" value="P:positive regulation of type B pancreatic cell proliferation"/>
    <property type="evidence" value="ECO:0000316"/>
    <property type="project" value="MGI"/>
</dbReference>
<dbReference type="GO" id="GO:0006606">
    <property type="term" value="P:protein import into nucleus"/>
    <property type="evidence" value="ECO:0000315"/>
    <property type="project" value="MGI"/>
</dbReference>
<dbReference type="GO" id="GO:0022604">
    <property type="term" value="P:regulation of cell morphogenesis"/>
    <property type="evidence" value="ECO:0000250"/>
    <property type="project" value="UniProtKB"/>
</dbReference>
<dbReference type="GO" id="GO:0040008">
    <property type="term" value="P:regulation of growth"/>
    <property type="evidence" value="ECO:0000315"/>
    <property type="project" value="MGI"/>
</dbReference>
<dbReference type="GO" id="GO:0001932">
    <property type="term" value="P:regulation of protein phosphorylation"/>
    <property type="evidence" value="ECO:0000314"/>
    <property type="project" value="UniProtKB"/>
</dbReference>
<dbReference type="GO" id="GO:0044342">
    <property type="term" value="P:type B pancreatic cell proliferation"/>
    <property type="evidence" value="ECO:0000316"/>
    <property type="project" value="MGI"/>
</dbReference>
<dbReference type="CDD" id="cd05529">
    <property type="entry name" value="Bromo_WDR9_I_like"/>
    <property type="match status" value="1"/>
</dbReference>
<dbReference type="CDD" id="cd05496">
    <property type="entry name" value="Bromo_WDR9_II"/>
    <property type="match status" value="1"/>
</dbReference>
<dbReference type="CDD" id="cd00200">
    <property type="entry name" value="WD40"/>
    <property type="match status" value="1"/>
</dbReference>
<dbReference type="FunFam" id="1.20.920.10:FF:000017">
    <property type="entry name" value="Bromodomain and WD repeat domain containing 1"/>
    <property type="match status" value="1"/>
</dbReference>
<dbReference type="FunFam" id="2.130.10.10:FF:000023">
    <property type="entry name" value="Bromodomain and WD repeat domain containing 1"/>
    <property type="match status" value="1"/>
</dbReference>
<dbReference type="FunFam" id="1.20.920.10:FF:000008">
    <property type="entry name" value="Bromodomain and WD repeat domain containing 3"/>
    <property type="match status" value="1"/>
</dbReference>
<dbReference type="FunFam" id="2.130.10.10:FF:000141">
    <property type="entry name" value="Pleckstrin homology domain interacting protein"/>
    <property type="match status" value="1"/>
</dbReference>
<dbReference type="Gene3D" id="1.20.920.10">
    <property type="entry name" value="Bromodomain-like"/>
    <property type="match status" value="2"/>
</dbReference>
<dbReference type="Gene3D" id="2.130.10.10">
    <property type="entry name" value="YVTN repeat-like/Quinoprotein amine dehydrogenase"/>
    <property type="match status" value="2"/>
</dbReference>
<dbReference type="InterPro" id="IPR052060">
    <property type="entry name" value="Bromo_WD_repeat"/>
</dbReference>
<dbReference type="InterPro" id="IPR001487">
    <property type="entry name" value="Bromodomain"/>
</dbReference>
<dbReference type="InterPro" id="IPR036427">
    <property type="entry name" value="Bromodomain-like_sf"/>
</dbReference>
<dbReference type="InterPro" id="IPR018359">
    <property type="entry name" value="Bromodomain_CS"/>
</dbReference>
<dbReference type="InterPro" id="IPR015943">
    <property type="entry name" value="WD40/YVTN_repeat-like_dom_sf"/>
</dbReference>
<dbReference type="InterPro" id="IPR019775">
    <property type="entry name" value="WD40_repeat_CS"/>
</dbReference>
<dbReference type="InterPro" id="IPR036322">
    <property type="entry name" value="WD40_repeat_dom_sf"/>
</dbReference>
<dbReference type="InterPro" id="IPR001680">
    <property type="entry name" value="WD40_rpt"/>
</dbReference>
<dbReference type="PANTHER" id="PTHR16266:SF4">
    <property type="entry name" value="PH-INTERACTING PROTEIN"/>
    <property type="match status" value="1"/>
</dbReference>
<dbReference type="PANTHER" id="PTHR16266">
    <property type="entry name" value="WD REPEAT DOMAIN 9"/>
    <property type="match status" value="1"/>
</dbReference>
<dbReference type="Pfam" id="PF00439">
    <property type="entry name" value="Bromodomain"/>
    <property type="match status" value="2"/>
</dbReference>
<dbReference type="Pfam" id="PF25437">
    <property type="entry name" value="BRWD1_N"/>
    <property type="match status" value="1"/>
</dbReference>
<dbReference type="Pfam" id="PF25313">
    <property type="entry name" value="BRWD_AD"/>
    <property type="match status" value="1"/>
</dbReference>
<dbReference type="Pfam" id="PF00400">
    <property type="entry name" value="WD40"/>
    <property type="match status" value="5"/>
</dbReference>
<dbReference type="PRINTS" id="PR00503">
    <property type="entry name" value="BROMODOMAIN"/>
</dbReference>
<dbReference type="SMART" id="SM00297">
    <property type="entry name" value="BROMO"/>
    <property type="match status" value="2"/>
</dbReference>
<dbReference type="SMART" id="SM00320">
    <property type="entry name" value="WD40"/>
    <property type="match status" value="8"/>
</dbReference>
<dbReference type="SUPFAM" id="SSF47370">
    <property type="entry name" value="Bromodomain"/>
    <property type="match status" value="2"/>
</dbReference>
<dbReference type="SUPFAM" id="SSF50978">
    <property type="entry name" value="WD40 repeat-like"/>
    <property type="match status" value="1"/>
</dbReference>
<dbReference type="PROSITE" id="PS00633">
    <property type="entry name" value="BROMODOMAIN_1"/>
    <property type="match status" value="1"/>
</dbReference>
<dbReference type="PROSITE" id="PS50014">
    <property type="entry name" value="BROMODOMAIN_2"/>
    <property type="match status" value="2"/>
</dbReference>
<dbReference type="PROSITE" id="PS00678">
    <property type="entry name" value="WD_REPEATS_1"/>
    <property type="match status" value="2"/>
</dbReference>
<dbReference type="PROSITE" id="PS50082">
    <property type="entry name" value="WD_REPEATS_2"/>
    <property type="match status" value="5"/>
</dbReference>
<dbReference type="PROSITE" id="PS50294">
    <property type="entry name" value="WD_REPEATS_REGION"/>
    <property type="match status" value="1"/>
</dbReference>
<accession>Q8VDD9</accession>
<accession>Q3TS96</accession>
<accession>Q80VI6</accession>
<accession>Q9EPY1</accession>
<accession>Q9ESL6</accession>
<gene>
    <name type="primary">Phip</name>
    <name type="synonym">Ndrp</name>
    <name type="synonym">Phip1</name>
    <name type="synonym">Wdr11</name>
</gene>
<sequence length="1821" mass="206726">MSRERKGLSELRSELYFLIARFLEDGPCQQAAQVLIREVAEKELLPRRTDWTGKEHPRTYQNLVKYYRHLAPDHLLQICHRLGPLLEQEIPQSVPGVQTLLGAGRQSLLRTNKSCKHVVWKGSALAALHCGRPPESPVNYGSPPSIADTLFSRKLNGKYRLERLVPTAVYQHMKMHKRILGHLSSVYCVTFDRTGRRIFTGSDDCLVKIWATDDGRLLATLRGHAAEISDMAVNYENTMIAAGSCDKMIRVWCLRTCAPLAVLQGHSASITSLQFSPLCSGSKRYLSSTGADGTICFWLWDAGTLKINPRPTKFTERPRPGVQMICSSFSAGGMFLATGSTDHIIRVYFFGSGQPEKISELEFHTDKVDSIQFSNTSNRFVSGSRDGTARIWQFKRREWKSILLDMATRPAGQNLQGIEDKITKMKVTMVAWDRHDNTVITAVNNMTLKVWNSYTGQLIHVLMGHEDEVFVLEPHPFDPRVLFSAGHDGNVIVWDLARGVKVRSYFNMIEGQGHGAVFDCKCSPDGQHFACTDSHGHLLIFGFGSSSKYDKIADQMFFHSDYRPLIRDANNFVLDEQTQQAPHLMPPPFLVDVDGNPHPSRYQRLVPGRENCREEQLIPQMGVTSSGLNQVLSQQANQDISPLDSMIQRLQQEQDLRRSGEAGVSNASRVNRGSVSSTSEVHSPPNIGLRRSGQIEGVRQMHSNAPRSEIATERDLVAWSRRVVVPELSAGVASRQEEWRTAKGEEEIKSYRSEEKRKHLTVAKENKILTVSKNHAHEHFLDLGDSKKQQANQHNYRTRSALEETPRPLEELENGTSSSDEGEVLAVSGGTSEEEERAWHSDGSSSDYSSDYSDWTADAGINLQPPKKVPKHKTKKPESSSDEEEESENQKQKHIKKERKKANEEKDGPTSPKKKKPKERKQKRLAVGELTENGLTLEEWLPSAWITDTLPRRCPFVPQMGDEVYYFRQGHEAYVEMARKNKIYSINPKKQPWHKMELREQELMKIVGIKYEVGLPTLCCLKLAFLDPDTGKLTGGSFTMKYHDMPDVIDFLVLRQQFDDAKYRPWNIGDRFRSVIDDAWWFGTIESQEPLQPEYPDSLFQCYNVCWDNGDTEKMSPWDMELIPNNAVFPEELGTSVPLTDVECRSLIYKPLDGEWGANPRDEECERIVGGINQLMTLDIASAFVAPVDLQAYPMYCTVVAYPTDLSTIKQRLENRFYRRFSSLMWEVRYIEHNTRTFNEPGSPIVKSAKFVTDLLLHFIKDQTCYNIIPLYNSMKKKVLSDSEEEEKDADVPGTSTRKRKDHQPRRRLRNRAQSYDIQAWKKQCQELLNLIFQCEDSEPFRQPVDLLEYPDYRDIIDTPMDFATVRETLEAGNYESPMELCKDVRLIFSNFKAYTPSKRSRIYSMSLRLSAFFEEHISSVLSDYKSALRFHKRNTISKKRKKRNRSSSLSSSAASSPERKKRILKPQLKSEVSTSPFSIPTRSVLPRHNAAQMNGKPESSSVVRTRSNRVAVDPVVTEQPSTSSATKAFVSKTNTSAMPGKAMLENSVRHSKALSTLSSPDPLTFSHATKNNSAKENMEKEKPVKRKMKSSVFSKASPLPKSAAVIEQGECKNNVLIPGTIQVNGHGGQPSKLVKRGPGRKPKVEVNTSSGEVTHKKRGRKPKNLQCAKQENSEQNNMHPIRADVLPSSTCNFLSETNAVKEDLLQKKSRGGRKPKRKMKTHNLDSELIVPTNVKVLRRSNRKKTDDPIDEEEEFEELKGSEPHMRTRNQGRRTAFYNEDDSEEEQRQLLFEDTSLTFGTSSRGRVRKLTEKAKANLIGW</sequence>
<proteinExistence type="evidence at protein level"/>
<organism>
    <name type="scientific">Mus musculus</name>
    <name type="common">Mouse</name>
    <dbReference type="NCBI Taxonomy" id="10090"/>
    <lineage>
        <taxon>Eukaryota</taxon>
        <taxon>Metazoa</taxon>
        <taxon>Chordata</taxon>
        <taxon>Craniata</taxon>
        <taxon>Vertebrata</taxon>
        <taxon>Euteleostomi</taxon>
        <taxon>Mammalia</taxon>
        <taxon>Eutheria</taxon>
        <taxon>Euarchontoglires</taxon>
        <taxon>Glires</taxon>
        <taxon>Rodentia</taxon>
        <taxon>Myomorpha</taxon>
        <taxon>Muroidea</taxon>
        <taxon>Muridae</taxon>
        <taxon>Murinae</taxon>
        <taxon>Mus</taxon>
        <taxon>Mus</taxon>
    </lineage>
</organism>
<feature type="chain" id="PRO_0000297758" description="PH-interacting protein">
    <location>
        <begin position="1"/>
        <end position="1821"/>
    </location>
</feature>
<feature type="repeat" description="WD 1">
    <location>
        <begin position="181"/>
        <end position="222"/>
    </location>
</feature>
<feature type="repeat" description="WD 2">
    <location>
        <begin position="224"/>
        <end position="262"/>
    </location>
</feature>
<feature type="repeat" description="WD 3">
    <location>
        <begin position="265"/>
        <end position="310"/>
    </location>
</feature>
<feature type="repeat" description="WD 4">
    <location>
        <begin position="319"/>
        <end position="360"/>
    </location>
</feature>
<feature type="repeat" description="WD 5">
    <location>
        <begin position="363"/>
        <end position="402"/>
    </location>
</feature>
<feature type="repeat" description="WD 6">
    <location>
        <begin position="422"/>
        <end position="461"/>
    </location>
</feature>
<feature type="repeat" description="WD 7">
    <location>
        <begin position="464"/>
        <end position="504"/>
    </location>
</feature>
<feature type="repeat" description="WD 8">
    <location>
        <begin position="512"/>
        <end position="551"/>
    </location>
</feature>
<feature type="domain" description="Bromo 1" evidence="3">
    <location>
        <begin position="1156"/>
        <end position="1263"/>
    </location>
</feature>
<feature type="domain" description="Bromo 2" evidence="3">
    <location>
        <begin position="1316"/>
        <end position="1421"/>
    </location>
</feature>
<feature type="region of interest" description="Disordered" evidence="4">
    <location>
        <begin position="653"/>
        <end position="695"/>
    </location>
</feature>
<feature type="region of interest" description="Disordered" evidence="4">
    <location>
        <begin position="782"/>
        <end position="927"/>
    </location>
</feature>
<feature type="region of interest" description="Mediates interaction with IRS1" evidence="5">
    <location>
        <begin position="924"/>
        <end position="1129"/>
    </location>
</feature>
<feature type="region of interest" description="Disordered" evidence="4">
    <location>
        <begin position="1282"/>
        <end position="1310"/>
    </location>
</feature>
<feature type="region of interest" description="Disordered" evidence="4">
    <location>
        <begin position="1435"/>
        <end position="1507"/>
    </location>
</feature>
<feature type="region of interest" description="Disordered" evidence="4">
    <location>
        <begin position="1556"/>
        <end position="1596"/>
    </location>
</feature>
<feature type="region of interest" description="Disordered" evidence="4">
    <location>
        <begin position="1623"/>
        <end position="1676"/>
    </location>
</feature>
<feature type="region of interest" description="Disordered" evidence="4">
    <location>
        <begin position="1740"/>
        <end position="1785"/>
    </location>
</feature>
<feature type="compositionally biased region" description="Polar residues" evidence="4">
    <location>
        <begin position="665"/>
        <end position="681"/>
    </location>
</feature>
<feature type="compositionally biased region" description="Basic and acidic residues" evidence="4">
    <location>
        <begin position="800"/>
        <end position="810"/>
    </location>
</feature>
<feature type="compositionally biased region" description="Low complexity" evidence="4">
    <location>
        <begin position="841"/>
        <end position="854"/>
    </location>
</feature>
<feature type="compositionally biased region" description="Basic residues" evidence="4">
    <location>
        <begin position="912"/>
        <end position="924"/>
    </location>
</feature>
<feature type="compositionally biased region" description="Basic residues" evidence="4">
    <location>
        <begin position="1297"/>
        <end position="1310"/>
    </location>
</feature>
<feature type="compositionally biased region" description="Basic residues" evidence="4">
    <location>
        <begin position="1435"/>
        <end position="1446"/>
    </location>
</feature>
<feature type="compositionally biased region" description="Low complexity" evidence="4">
    <location>
        <begin position="1447"/>
        <end position="1457"/>
    </location>
</feature>
<feature type="compositionally biased region" description="Polar residues" evidence="4">
    <location>
        <begin position="1471"/>
        <end position="1482"/>
    </location>
</feature>
<feature type="compositionally biased region" description="Polar residues" evidence="4">
    <location>
        <begin position="1556"/>
        <end position="1576"/>
    </location>
</feature>
<feature type="modified residue" description="Phosphoserine" evidence="2">
    <location>
        <position position="136"/>
    </location>
</feature>
<feature type="modified residue" description="Phosphoserine" evidence="2">
    <location>
        <position position="641"/>
    </location>
</feature>
<feature type="modified residue" description="Phosphoserine" evidence="2">
    <location>
        <position position="659"/>
    </location>
</feature>
<feature type="modified residue" description="Phosphoserine" evidence="2">
    <location>
        <position position="674"/>
    </location>
</feature>
<feature type="modified residue" description="Phosphoserine" evidence="2">
    <location>
        <position position="677"/>
    </location>
</feature>
<feature type="modified residue" description="Phosphoserine" evidence="2">
    <location>
        <position position="683"/>
    </location>
</feature>
<feature type="modified residue" description="Phosphoserine" evidence="2">
    <location>
        <position position="692"/>
    </location>
</feature>
<feature type="modified residue" description="Phosphoserine" evidence="2">
    <location>
        <position position="879"/>
    </location>
</feature>
<feature type="modified residue" description="Phosphoserine" evidence="2">
    <location>
        <position position="880"/>
    </location>
</feature>
<feature type="modified residue" description="Phosphoserine" evidence="2">
    <location>
        <position position="881"/>
    </location>
</feature>
<feature type="modified residue" description="Phosphoserine" evidence="2">
    <location>
        <position position="911"/>
    </location>
</feature>
<feature type="modified residue" description="Phosphoserine" evidence="10 11 12">
    <location>
        <position position="1281"/>
    </location>
</feature>
<feature type="modified residue" description="Phosphoserine" evidence="10 11 12">
    <location>
        <position position="1283"/>
    </location>
</feature>
<feature type="modified residue" description="Phosphoserine" evidence="2">
    <location>
        <position position="1296"/>
    </location>
</feature>
<feature type="modified residue" description="Phosphoserine" evidence="12">
    <location>
        <position position="1315"/>
    </location>
</feature>
<feature type="modified residue" description="Phosphothreonine" evidence="2">
    <location>
        <position position="1359"/>
    </location>
</feature>
<feature type="modified residue" description="Phosphoserine" evidence="2">
    <location>
        <position position="1405"/>
    </location>
</feature>
<feature type="modified residue" description="Phosphoserine" evidence="2">
    <location>
        <position position="1479"/>
    </location>
</feature>
<feature type="modified residue" description="N6-acetyllysine" evidence="2">
    <location>
        <position position="1497"/>
    </location>
</feature>
<feature type="modified residue" description="Phosphoserine" evidence="2">
    <location>
        <position position="1525"/>
    </location>
</feature>
<feature type="modified residue" description="N6-acetyllysine" evidence="13">
    <location>
        <position position="1533"/>
    </location>
</feature>
<feature type="modified residue" description="Phosphoserine" evidence="2">
    <location>
        <position position="1560"/>
    </location>
</feature>
<feature type="modified residue" description="Phosphoserine" evidence="2">
    <location>
        <position position="1651"/>
    </location>
</feature>
<feature type="modified residue" description="Phosphoserine" evidence="2">
    <location>
        <position position="1762"/>
    </location>
</feature>
<feature type="modified residue" description="Phosphoserine" evidence="12">
    <location>
        <position position="1783"/>
    </location>
</feature>
<feature type="cross-link" description="Glycyl lysine isopeptide (Lys-Gly) (interchain with G-Cter in SUMO2)" evidence="2">
    <location>
        <position position="421"/>
    </location>
</feature>
<feature type="cross-link" description="Glycyl lysine isopeptide (Lys-Gly) (interchain with G-Cter in SUMO1); alternate" evidence="2">
    <location>
        <position position="1470"/>
    </location>
</feature>
<feature type="cross-link" description="Glycyl lysine isopeptide (Lys-Gly) (interchain with G-Cter in SUMO2); alternate" evidence="2">
    <location>
        <position position="1470"/>
    </location>
</feature>
<feature type="cross-link" description="Glycyl lysine isopeptide (Lys-Gly) (interchain with G-Cter in SUMO2)" evidence="2">
    <location>
        <position position="1644"/>
    </location>
</feature>
<feature type="cross-link" description="Glycyl lysine isopeptide (Lys-Gly) (interchain with G-Cter in SUMO2)" evidence="2">
    <location>
        <position position="1670"/>
    </location>
</feature>
<feature type="sequence conflict" description="In Ref. 3; AAH49950." evidence="9" ref="3">
    <original>R</original>
    <variation>G</variation>
    <location>
        <position position="672"/>
    </location>
</feature>
<feature type="sequence conflict" description="In Ref. 4; BAE36779 and 5; AAG45146." evidence="9" ref="4 5">
    <original>P</original>
    <variation>R</variation>
    <location>
        <position position="1065"/>
    </location>
</feature>
<feature type="sequence conflict" description="In Ref. 5; AAG45146." evidence="9" ref="5">
    <original>E</original>
    <variation>D</variation>
    <location>
        <position position="1155"/>
    </location>
</feature>
<feature type="sequence conflict" description="In Ref. 4; BAE36779 and 5; AAG45146." evidence="9" ref="4 5">
    <original>F</original>
    <variation>S</variation>
    <location>
        <position position="1392"/>
    </location>
</feature>
<feature type="sequence conflict" description="In Ref. 5; AAG45146." evidence="9" ref="5">
    <original>A</original>
    <variation>T</variation>
    <location>
        <position position="1776"/>
    </location>
</feature>
<comment type="function">
    <text evidence="5 7 8">Probable regulator of the insulin and insulin-like growth factor signaling pathways. Stimulates cell proliferation through regulation of cyclin transcription and has an anti-apoptotic activity through AKT1 phosphorylation and activation. Plays a role in the regulation of cell morphology and cytoskeletal organization.</text>
</comment>
<comment type="subunit">
    <text evidence="1 5">Interacts (via bromo domain) with acetylated lysine residues on histone H1.4, histone H3 and H4 (in vitro) (By similarity). Interacts with IRS1 and IRS2.</text>
</comment>
<comment type="interaction">
    <interactant intactId="EBI-1369766">
        <id>Q8VDD9</id>
    </interactant>
    <interactant intactId="EBI-520230">
        <id>P35570</id>
        <label>Irs1</label>
    </interactant>
    <organismsDiffer>true</organismsDiffer>
    <experiments>2</experiments>
</comment>
<comment type="subcellular location">
    <subcellularLocation>
        <location evidence="8">Nucleus</location>
    </subcellularLocation>
</comment>
<comment type="tissue specificity">
    <text evidence="5 6 8">Widely expressed with most abundant expression detected in pancreatic islets, brain and skeletal muscle. Predominantly expressed in developing and regenerating neurons. Expressed in adult brain (granular layer of the olfactorium bulb, hippocampus, dentate gyrus and cerebellum internal granular layer). Expressed in the CA3 region of adult hippocampus, adult and fetal retina, perinatal dorsal root ganglion and embryonal olfactory epithelia (at protein level).</text>
</comment>
<comment type="developmental stage">
    <text evidence="6">Expressed at highest levels at 17.5 dpc in the neural layer of the retina and olfactory epithelia.</text>
</comment>
<comment type="induction">
    <text evidence="6">In motor neurons after injury.</text>
</comment>
<comment type="sequence caution" evidence="9">
    <conflict type="miscellaneous discrepancy">
        <sequence resource="EMBL-CDS" id="AAG45146"/>
    </conflict>
    <text>Intron retention. This sequence is incomplete at the 5' end and extensively differs from that shown.</text>
</comment>
<comment type="sequence caution" evidence="9">
    <conflict type="miscellaneous discrepancy">
        <sequence resource="EMBL-CDS" id="AAH49950"/>
    </conflict>
    <text>Contaminating sequence. Potential poly-A sequence.</text>
</comment>
<comment type="sequence caution" evidence="9">
    <conflict type="miscellaneous discrepancy">
        <sequence resource="EMBL-CDS" id="BAB16299"/>
    </conflict>
    <text>Intron retention. This sequence is incomplete at the 3' end and extensively differs from that shown.</text>
</comment>
<name>PHIP_MOUSE</name>
<protein>
    <recommendedName>
        <fullName>PH-interacting protein</fullName>
        <shortName>PHIP</shortName>
    </recommendedName>
    <alternativeName>
        <fullName>IRS-1 PH domain-binding protein</fullName>
    </alternativeName>
    <alternativeName>
        <fullName>Neuronal differentiation-related protein</fullName>
        <shortName>NDRP</shortName>
    </alternativeName>
    <alternativeName>
        <fullName>WD repeat-containing protein 11</fullName>
    </alternativeName>
</protein>